<dbReference type="EMBL" id="BC080486">
    <property type="protein sequence ID" value="AAH80486.1"/>
    <property type="molecule type" value="mRNA"/>
</dbReference>
<dbReference type="EMBL" id="BC089666">
    <property type="protein sequence ID" value="AAH89666.1"/>
    <property type="molecule type" value="mRNA"/>
</dbReference>
<dbReference type="RefSeq" id="NP_001007977.1">
    <property type="nucleotide sequence ID" value="NM_001007976.2"/>
</dbReference>
<dbReference type="RefSeq" id="XP_017947537.1">
    <property type="nucleotide sequence ID" value="XM_018092048.2"/>
</dbReference>
<dbReference type="FunCoup" id="Q66KA5">
    <property type="interactions" value="4192"/>
</dbReference>
<dbReference type="STRING" id="8364.ENSXETP00000019053"/>
<dbReference type="PaxDb" id="8364-ENSXETP00000012028"/>
<dbReference type="DNASU" id="493343"/>
<dbReference type="GeneID" id="493343"/>
<dbReference type="KEGG" id="xtr:493343"/>
<dbReference type="AGR" id="Xenbase:XB-GENE-977461"/>
<dbReference type="CTD" id="81555"/>
<dbReference type="Xenbase" id="XB-GENE-977461">
    <property type="gene designation" value="yipf5"/>
</dbReference>
<dbReference type="eggNOG" id="KOG3103">
    <property type="taxonomic scope" value="Eukaryota"/>
</dbReference>
<dbReference type="HOGENOM" id="CLU_074741_2_0_1"/>
<dbReference type="InParanoid" id="Q66KA5"/>
<dbReference type="OMA" id="HIRAKSM"/>
<dbReference type="OrthoDB" id="440385at2759"/>
<dbReference type="PhylomeDB" id="Q66KA5"/>
<dbReference type="TreeFam" id="TF313100"/>
<dbReference type="Proteomes" id="UP000008143">
    <property type="component" value="Chromosome 3"/>
</dbReference>
<dbReference type="Bgee" id="ENSXETG00000005469">
    <property type="expression patterns" value="Expressed in egg cell and 14 other cell types or tissues"/>
</dbReference>
<dbReference type="ExpressionAtlas" id="Q66KA5">
    <property type="expression patterns" value="baseline"/>
</dbReference>
<dbReference type="GO" id="GO:0005789">
    <property type="term" value="C:endoplasmic reticulum membrane"/>
    <property type="evidence" value="ECO:0007669"/>
    <property type="project" value="UniProtKB-SubCell"/>
</dbReference>
<dbReference type="GO" id="GO:0005794">
    <property type="term" value="C:Golgi apparatus"/>
    <property type="evidence" value="ECO:0007669"/>
    <property type="project" value="UniProtKB-SubCell"/>
</dbReference>
<dbReference type="GO" id="GO:0006888">
    <property type="term" value="P:endoplasmic reticulum to Golgi vesicle-mediated transport"/>
    <property type="evidence" value="ECO:0007669"/>
    <property type="project" value="InterPro"/>
</dbReference>
<dbReference type="GO" id="GO:0015031">
    <property type="term" value="P:protein transport"/>
    <property type="evidence" value="ECO:0007669"/>
    <property type="project" value="UniProtKB-KW"/>
</dbReference>
<dbReference type="InterPro" id="IPR045231">
    <property type="entry name" value="Yip1/4-like"/>
</dbReference>
<dbReference type="InterPro" id="IPR006977">
    <property type="entry name" value="Yip1_dom"/>
</dbReference>
<dbReference type="PANTHER" id="PTHR21236">
    <property type="entry name" value="GOLGI MEMBRANE PROTEIN YIP1"/>
    <property type="match status" value="1"/>
</dbReference>
<dbReference type="PANTHER" id="PTHR21236:SF6">
    <property type="entry name" value="PROTEIN YIPF5"/>
    <property type="match status" value="1"/>
</dbReference>
<dbReference type="Pfam" id="PF04893">
    <property type="entry name" value="Yip1"/>
    <property type="match status" value="1"/>
</dbReference>
<proteinExistence type="evidence at transcript level"/>
<name>YIPF5_XENTR</name>
<sequence length="256" mass="27885">MSNFDNFNTDFYQTSYSIDDQSQGYNYNAGGAQHSKQYAYDPYSQQGGFIPPEMMNQQQPYTGQIYQPTQTYTPAATDSVYGSTFDDEPPLLEELGINFDHIWQKTLTVLHPLKVADGNIMNETDLAGPMVFCLAFGATLLLAGKIQFGYVYGISAIGCLGMYCLLNLMSMTGVSFGCVSSVLGYCLLPMIILSSFAVIFSLQGILGIVLAALIIGWCSFSASKIFISALAMDGQQVLVAYPCALLYGVFALISVF</sequence>
<feature type="chain" id="PRO_0000234335" description="Protein YIPF5">
    <location>
        <begin position="1"/>
        <end position="256"/>
    </location>
</feature>
<feature type="topological domain" description="Cytoplasmic" evidence="2">
    <location>
        <begin position="1"/>
        <end position="125"/>
    </location>
</feature>
<feature type="transmembrane region" description="Helical" evidence="4">
    <location>
        <begin position="126"/>
        <end position="146"/>
    </location>
</feature>
<feature type="topological domain" description="Lumenal" evidence="5">
    <location>
        <position position="147"/>
    </location>
</feature>
<feature type="transmembrane region" description="Helical" evidence="4">
    <location>
        <begin position="148"/>
        <end position="168"/>
    </location>
</feature>
<feature type="topological domain" description="Cytoplasmic" evidence="5">
    <location>
        <begin position="169"/>
        <end position="172"/>
    </location>
</feature>
<feature type="transmembrane region" description="Helical" evidence="4">
    <location>
        <begin position="173"/>
        <end position="193"/>
    </location>
</feature>
<feature type="topological domain" description="Lumenal" evidence="5">
    <location>
        <begin position="194"/>
        <end position="195"/>
    </location>
</feature>
<feature type="transmembrane region" description="Helical" evidence="4">
    <location>
        <begin position="196"/>
        <end position="216"/>
    </location>
</feature>
<feature type="topological domain" description="Cytoplasmic" evidence="5">
    <location>
        <begin position="217"/>
        <end position="235"/>
    </location>
</feature>
<feature type="transmembrane region" description="Helical" evidence="4">
    <location>
        <begin position="236"/>
        <end position="256"/>
    </location>
</feature>
<accession>Q66KA5</accession>
<organism>
    <name type="scientific">Xenopus tropicalis</name>
    <name type="common">Western clawed frog</name>
    <name type="synonym">Silurana tropicalis</name>
    <dbReference type="NCBI Taxonomy" id="8364"/>
    <lineage>
        <taxon>Eukaryota</taxon>
        <taxon>Metazoa</taxon>
        <taxon>Chordata</taxon>
        <taxon>Craniata</taxon>
        <taxon>Vertebrata</taxon>
        <taxon>Euteleostomi</taxon>
        <taxon>Amphibia</taxon>
        <taxon>Batrachia</taxon>
        <taxon>Anura</taxon>
        <taxon>Pipoidea</taxon>
        <taxon>Pipidae</taxon>
        <taxon>Xenopodinae</taxon>
        <taxon>Xenopus</taxon>
        <taxon>Silurana</taxon>
    </lineage>
</organism>
<reference key="1">
    <citation type="submission" date="2004-08" db="EMBL/GenBank/DDBJ databases">
        <authorList>
            <consortium name="NIH - Xenopus Gene Collection (XGC) project"/>
        </authorList>
    </citation>
    <scope>NUCLEOTIDE SEQUENCE [LARGE SCALE MRNA]</scope>
    <source>
        <tissue>Embryo</tissue>
    </source>
</reference>
<comment type="function">
    <text evidence="1">Plays a role in transport between endoplasmic reticulum and Golgi.</text>
</comment>
<comment type="subcellular location">
    <subcellularLocation>
        <location evidence="3">Endoplasmic reticulum membrane</location>
        <topology>Multi-pass membrane protein</topology>
    </subcellularLocation>
    <subcellularLocation>
        <location evidence="2">Golgi apparatus</location>
        <location evidence="2">cis-Golgi network membrane</location>
        <topology evidence="1">Multi-pass membrane protein</topology>
    </subcellularLocation>
</comment>
<comment type="similarity">
    <text evidence="5">Belongs to the YIP1 family.</text>
</comment>
<evidence type="ECO:0000250" key="1"/>
<evidence type="ECO:0000250" key="2">
    <source>
        <dbReference type="UniProtKB" id="Q969M3"/>
    </source>
</evidence>
<evidence type="ECO:0000250" key="3">
    <source>
        <dbReference type="UniProtKB" id="Q9EQQ2"/>
    </source>
</evidence>
<evidence type="ECO:0000255" key="4"/>
<evidence type="ECO:0000305" key="5"/>
<protein>
    <recommendedName>
        <fullName>Protein YIPF5</fullName>
    </recommendedName>
    <alternativeName>
        <fullName>YIP1 family member 5</fullName>
    </alternativeName>
</protein>
<gene>
    <name type="primary">yipf5</name>
</gene>
<keyword id="KW-0256">Endoplasmic reticulum</keyword>
<keyword id="KW-0931">ER-Golgi transport</keyword>
<keyword id="KW-0333">Golgi apparatus</keyword>
<keyword id="KW-0472">Membrane</keyword>
<keyword id="KW-0653">Protein transport</keyword>
<keyword id="KW-1185">Reference proteome</keyword>
<keyword id="KW-0812">Transmembrane</keyword>
<keyword id="KW-1133">Transmembrane helix</keyword>
<keyword id="KW-0813">Transport</keyword>